<dbReference type="EC" id="6.1.1.4" evidence="1"/>
<dbReference type="EMBL" id="FM200053">
    <property type="protein sequence ID" value="CAR60139.1"/>
    <property type="molecule type" value="Genomic_DNA"/>
</dbReference>
<dbReference type="RefSeq" id="WP_001157911.1">
    <property type="nucleotide sequence ID" value="NC_011147.1"/>
</dbReference>
<dbReference type="SMR" id="B5BCE6"/>
<dbReference type="KEGG" id="sek:SSPA1938"/>
<dbReference type="HOGENOM" id="CLU_004427_0_0_6"/>
<dbReference type="Proteomes" id="UP000001869">
    <property type="component" value="Chromosome"/>
</dbReference>
<dbReference type="GO" id="GO:0005829">
    <property type="term" value="C:cytosol"/>
    <property type="evidence" value="ECO:0007669"/>
    <property type="project" value="TreeGrafter"/>
</dbReference>
<dbReference type="GO" id="GO:0002161">
    <property type="term" value="F:aminoacyl-tRNA deacylase activity"/>
    <property type="evidence" value="ECO:0007669"/>
    <property type="project" value="InterPro"/>
</dbReference>
<dbReference type="GO" id="GO:0005524">
    <property type="term" value="F:ATP binding"/>
    <property type="evidence" value="ECO:0007669"/>
    <property type="project" value="UniProtKB-UniRule"/>
</dbReference>
<dbReference type="GO" id="GO:0004823">
    <property type="term" value="F:leucine-tRNA ligase activity"/>
    <property type="evidence" value="ECO:0007669"/>
    <property type="project" value="UniProtKB-UniRule"/>
</dbReference>
<dbReference type="GO" id="GO:0006429">
    <property type="term" value="P:leucyl-tRNA aminoacylation"/>
    <property type="evidence" value="ECO:0007669"/>
    <property type="project" value="UniProtKB-UniRule"/>
</dbReference>
<dbReference type="CDD" id="cd07958">
    <property type="entry name" value="Anticodon_Ia_Leu_BEm"/>
    <property type="match status" value="1"/>
</dbReference>
<dbReference type="CDD" id="cd00812">
    <property type="entry name" value="LeuRS_core"/>
    <property type="match status" value="1"/>
</dbReference>
<dbReference type="FunFam" id="1.10.730.10:FF:000002">
    <property type="entry name" value="Leucine--tRNA ligase"/>
    <property type="match status" value="2"/>
</dbReference>
<dbReference type="FunFam" id="2.20.28.290:FF:000001">
    <property type="entry name" value="Leucine--tRNA ligase"/>
    <property type="match status" value="1"/>
</dbReference>
<dbReference type="FunFam" id="3.10.20.590:FF:000001">
    <property type="entry name" value="Leucine--tRNA ligase"/>
    <property type="match status" value="1"/>
</dbReference>
<dbReference type="FunFam" id="3.40.50.620:FF:000003">
    <property type="entry name" value="Leucine--tRNA ligase"/>
    <property type="match status" value="1"/>
</dbReference>
<dbReference type="FunFam" id="3.40.50.620:FF:000124">
    <property type="entry name" value="Leucine--tRNA ligase"/>
    <property type="match status" value="1"/>
</dbReference>
<dbReference type="FunFam" id="3.90.740.10:FF:000012">
    <property type="entry name" value="Leucine--tRNA ligase"/>
    <property type="match status" value="1"/>
</dbReference>
<dbReference type="Gene3D" id="2.20.28.290">
    <property type="match status" value="1"/>
</dbReference>
<dbReference type="Gene3D" id="3.10.20.590">
    <property type="match status" value="1"/>
</dbReference>
<dbReference type="Gene3D" id="3.40.50.620">
    <property type="entry name" value="HUPs"/>
    <property type="match status" value="2"/>
</dbReference>
<dbReference type="Gene3D" id="1.10.730.10">
    <property type="entry name" value="Isoleucyl-tRNA Synthetase, Domain 1"/>
    <property type="match status" value="1"/>
</dbReference>
<dbReference type="Gene3D" id="3.90.740.10">
    <property type="entry name" value="Valyl/Leucyl/Isoleucyl-tRNA synthetase, editing domain"/>
    <property type="match status" value="1"/>
</dbReference>
<dbReference type="HAMAP" id="MF_00049_B">
    <property type="entry name" value="Leu_tRNA_synth_B"/>
    <property type="match status" value="1"/>
</dbReference>
<dbReference type="InterPro" id="IPR001412">
    <property type="entry name" value="aa-tRNA-synth_I_CS"/>
</dbReference>
<dbReference type="InterPro" id="IPR002300">
    <property type="entry name" value="aa-tRNA-synth_Ia"/>
</dbReference>
<dbReference type="InterPro" id="IPR002302">
    <property type="entry name" value="Leu-tRNA-ligase"/>
</dbReference>
<dbReference type="InterPro" id="IPR025709">
    <property type="entry name" value="Leu_tRNA-synth_edit"/>
</dbReference>
<dbReference type="InterPro" id="IPR013155">
    <property type="entry name" value="M/V/L/I-tRNA-synth_anticd-bd"/>
</dbReference>
<dbReference type="InterPro" id="IPR015413">
    <property type="entry name" value="Methionyl/Leucyl_tRNA_Synth"/>
</dbReference>
<dbReference type="InterPro" id="IPR014729">
    <property type="entry name" value="Rossmann-like_a/b/a_fold"/>
</dbReference>
<dbReference type="InterPro" id="IPR009080">
    <property type="entry name" value="tRNAsynth_Ia_anticodon-bd"/>
</dbReference>
<dbReference type="InterPro" id="IPR009008">
    <property type="entry name" value="Val/Leu/Ile-tRNA-synth_edit"/>
</dbReference>
<dbReference type="NCBIfam" id="TIGR00396">
    <property type="entry name" value="leuS_bact"/>
    <property type="match status" value="1"/>
</dbReference>
<dbReference type="PANTHER" id="PTHR43740:SF2">
    <property type="entry name" value="LEUCINE--TRNA LIGASE, MITOCHONDRIAL"/>
    <property type="match status" value="1"/>
</dbReference>
<dbReference type="PANTHER" id="PTHR43740">
    <property type="entry name" value="LEUCYL-TRNA SYNTHETASE"/>
    <property type="match status" value="1"/>
</dbReference>
<dbReference type="Pfam" id="PF08264">
    <property type="entry name" value="Anticodon_1"/>
    <property type="match status" value="1"/>
</dbReference>
<dbReference type="Pfam" id="PF00133">
    <property type="entry name" value="tRNA-synt_1"/>
    <property type="match status" value="2"/>
</dbReference>
<dbReference type="Pfam" id="PF13603">
    <property type="entry name" value="tRNA-synt_1_2"/>
    <property type="match status" value="1"/>
</dbReference>
<dbReference type="Pfam" id="PF09334">
    <property type="entry name" value="tRNA-synt_1g"/>
    <property type="match status" value="1"/>
</dbReference>
<dbReference type="PRINTS" id="PR00985">
    <property type="entry name" value="TRNASYNTHLEU"/>
</dbReference>
<dbReference type="SUPFAM" id="SSF47323">
    <property type="entry name" value="Anticodon-binding domain of a subclass of class I aminoacyl-tRNA synthetases"/>
    <property type="match status" value="1"/>
</dbReference>
<dbReference type="SUPFAM" id="SSF52374">
    <property type="entry name" value="Nucleotidylyl transferase"/>
    <property type="match status" value="1"/>
</dbReference>
<dbReference type="SUPFAM" id="SSF50677">
    <property type="entry name" value="ValRS/IleRS/LeuRS editing domain"/>
    <property type="match status" value="1"/>
</dbReference>
<dbReference type="PROSITE" id="PS00178">
    <property type="entry name" value="AA_TRNA_LIGASE_I"/>
    <property type="match status" value="1"/>
</dbReference>
<sequence>MQEQYRPEEIESKVQLHWDEKRTFEVTEDESKEKYYCLSMLPYPSGRLHMGHVRNYTIGDVVARYQRMLGKNVLQPIGWDAFGLPAEGAAVKNNTAPAPWTYDNIAYMKNQLKTLGFGYDWSREIATCTPEYYRWEQKFFTELYKKGLVYKKTSAVNWCPNDQTVLANEQVIDGCCWRCDTKVERKEIPQWFIKITAYADELLRDLDKLDHWPDTVKTMQRNWIGRSEGVEITFDVKGYDNTLIVYTTRPDTFMGATYLAVAAGHPLAQKAAANNAELAAFVDECRNTKVAEAEMATMEKKGVDTGYKAIHPLTGEEIPVWAANFVLMEYGTGAVMAVPGHDQRDYEFASKYGLTIKPVILAADGSEPDLSEQALTEKGVLFNSGEFDGLAFEAAFNAIADKLAEKGVGERKVNYRLRDWGVSRQRYWGAPIPMITQEDGTVLPTPEDQLPVILPEDVVMDGITSPIKADPEWAKTTVNGMPALRETDTFDTFMESSWYYARYTCPQYQEGMLDSKAANYWLPVDIYIGGIEHAIMHLLYFRFFHKLMRDAGMVTSDEPAKQLLCQGMVLADAFYYVGENGERNWVSPVDAIVERDEKGRIVKAKDAAGHELVYTGMSKMSKSKNNGIDPQVMVERYGADTVRLFMMFASPADMTLEWQESGVEGANRFIKRVWKLVYEHTAKGPVAALNVDALSEDQKALRRDVHKTIAKVTDDIGRRQTFNTAIAAIMELMNKLAKAPQEGEQDRALLQEALQAVVRMLNPFTPHVCFTLWQELGGEGDIDNAPWPVADEQAMVENTTLVVVQVNGKVRGKITVAVDATEEQVRERAGQEHLVAKYLDGVTVRKVIYVPGKLLNLVVG</sequence>
<reference key="1">
    <citation type="journal article" date="2009" name="BMC Genomics">
        <title>Pseudogene accumulation in the evolutionary histories of Salmonella enterica serovars Paratyphi A and Typhi.</title>
        <authorList>
            <person name="Holt K.E."/>
            <person name="Thomson N.R."/>
            <person name="Wain J."/>
            <person name="Langridge G.C."/>
            <person name="Hasan R."/>
            <person name="Bhutta Z.A."/>
            <person name="Quail M.A."/>
            <person name="Norbertczak H."/>
            <person name="Walker D."/>
            <person name="Simmonds M."/>
            <person name="White B."/>
            <person name="Bason N."/>
            <person name="Mungall K."/>
            <person name="Dougan G."/>
            <person name="Parkhill J."/>
        </authorList>
    </citation>
    <scope>NUCLEOTIDE SEQUENCE [LARGE SCALE GENOMIC DNA]</scope>
    <source>
        <strain>AKU_12601</strain>
    </source>
</reference>
<feature type="chain" id="PRO_1000091360" description="Leucine--tRNA ligase">
    <location>
        <begin position="1"/>
        <end position="860"/>
    </location>
</feature>
<feature type="short sequence motif" description="'HIGH' region">
    <location>
        <begin position="42"/>
        <end position="52"/>
    </location>
</feature>
<feature type="short sequence motif" description="'KMSKS' region">
    <location>
        <begin position="619"/>
        <end position="623"/>
    </location>
</feature>
<feature type="binding site" evidence="1">
    <location>
        <position position="622"/>
    </location>
    <ligand>
        <name>ATP</name>
        <dbReference type="ChEBI" id="CHEBI:30616"/>
    </ligand>
</feature>
<keyword id="KW-0030">Aminoacyl-tRNA synthetase</keyword>
<keyword id="KW-0067">ATP-binding</keyword>
<keyword id="KW-0963">Cytoplasm</keyword>
<keyword id="KW-0436">Ligase</keyword>
<keyword id="KW-0547">Nucleotide-binding</keyword>
<keyword id="KW-0648">Protein biosynthesis</keyword>
<evidence type="ECO:0000255" key="1">
    <source>
        <dbReference type="HAMAP-Rule" id="MF_00049"/>
    </source>
</evidence>
<protein>
    <recommendedName>
        <fullName evidence="1">Leucine--tRNA ligase</fullName>
        <ecNumber evidence="1">6.1.1.4</ecNumber>
    </recommendedName>
    <alternativeName>
        <fullName evidence="1">Leucyl-tRNA synthetase</fullName>
        <shortName evidence="1">LeuRS</shortName>
    </alternativeName>
</protein>
<accession>B5BCE6</accession>
<proteinExistence type="inferred from homology"/>
<organism>
    <name type="scientific">Salmonella paratyphi A (strain AKU_12601)</name>
    <dbReference type="NCBI Taxonomy" id="554290"/>
    <lineage>
        <taxon>Bacteria</taxon>
        <taxon>Pseudomonadati</taxon>
        <taxon>Pseudomonadota</taxon>
        <taxon>Gammaproteobacteria</taxon>
        <taxon>Enterobacterales</taxon>
        <taxon>Enterobacteriaceae</taxon>
        <taxon>Salmonella</taxon>
    </lineage>
</organism>
<comment type="catalytic activity">
    <reaction evidence="1">
        <text>tRNA(Leu) + L-leucine + ATP = L-leucyl-tRNA(Leu) + AMP + diphosphate</text>
        <dbReference type="Rhea" id="RHEA:11688"/>
        <dbReference type="Rhea" id="RHEA-COMP:9613"/>
        <dbReference type="Rhea" id="RHEA-COMP:9622"/>
        <dbReference type="ChEBI" id="CHEBI:30616"/>
        <dbReference type="ChEBI" id="CHEBI:33019"/>
        <dbReference type="ChEBI" id="CHEBI:57427"/>
        <dbReference type="ChEBI" id="CHEBI:78442"/>
        <dbReference type="ChEBI" id="CHEBI:78494"/>
        <dbReference type="ChEBI" id="CHEBI:456215"/>
        <dbReference type="EC" id="6.1.1.4"/>
    </reaction>
</comment>
<comment type="subcellular location">
    <subcellularLocation>
        <location evidence="1">Cytoplasm</location>
    </subcellularLocation>
</comment>
<comment type="similarity">
    <text evidence="1">Belongs to the class-I aminoacyl-tRNA synthetase family.</text>
</comment>
<name>SYL_SALPK</name>
<gene>
    <name evidence="1" type="primary">leuS</name>
    <name type="ordered locus">SSPA1938</name>
</gene>